<proteinExistence type="inferred from homology"/>
<dbReference type="EC" id="2.7.13.3"/>
<dbReference type="EMBL" id="AP006716">
    <property type="protein sequence ID" value="BAE05543.1"/>
    <property type="molecule type" value="Genomic_DNA"/>
</dbReference>
<dbReference type="RefSeq" id="WP_011276494.1">
    <property type="nucleotide sequence ID" value="NC_007168.1"/>
</dbReference>
<dbReference type="SMR" id="Q4L482"/>
<dbReference type="KEGG" id="sha:SH2234"/>
<dbReference type="eggNOG" id="COG2205">
    <property type="taxonomic scope" value="Bacteria"/>
</dbReference>
<dbReference type="HOGENOM" id="CLU_000445_13_1_9"/>
<dbReference type="OrthoDB" id="9780487at2"/>
<dbReference type="Proteomes" id="UP000000543">
    <property type="component" value="Chromosome"/>
</dbReference>
<dbReference type="GO" id="GO:0005886">
    <property type="term" value="C:plasma membrane"/>
    <property type="evidence" value="ECO:0007669"/>
    <property type="project" value="UniProtKB-SubCell"/>
</dbReference>
<dbReference type="GO" id="GO:0005524">
    <property type="term" value="F:ATP binding"/>
    <property type="evidence" value="ECO:0007669"/>
    <property type="project" value="UniProtKB-KW"/>
</dbReference>
<dbReference type="GO" id="GO:0004721">
    <property type="term" value="F:phosphoprotein phosphatase activity"/>
    <property type="evidence" value="ECO:0007669"/>
    <property type="project" value="TreeGrafter"/>
</dbReference>
<dbReference type="GO" id="GO:0000155">
    <property type="term" value="F:phosphorelay sensor kinase activity"/>
    <property type="evidence" value="ECO:0007669"/>
    <property type="project" value="InterPro"/>
</dbReference>
<dbReference type="GO" id="GO:0016036">
    <property type="term" value="P:cellular response to phosphate starvation"/>
    <property type="evidence" value="ECO:0007669"/>
    <property type="project" value="TreeGrafter"/>
</dbReference>
<dbReference type="GO" id="GO:0046677">
    <property type="term" value="P:response to antibiotic"/>
    <property type="evidence" value="ECO:0007669"/>
    <property type="project" value="UniProtKB-KW"/>
</dbReference>
<dbReference type="CDD" id="cd16948">
    <property type="entry name" value="HATPase_BceS-YxdK-YvcQ-like"/>
    <property type="match status" value="1"/>
</dbReference>
<dbReference type="Gene3D" id="3.30.565.10">
    <property type="entry name" value="Histidine kinase-like ATPase, C-terminal domain"/>
    <property type="match status" value="1"/>
</dbReference>
<dbReference type="InterPro" id="IPR050351">
    <property type="entry name" value="2-comp_sensor_kinase"/>
</dbReference>
<dbReference type="InterPro" id="IPR036890">
    <property type="entry name" value="HATPase_C_sf"/>
</dbReference>
<dbReference type="InterPro" id="IPR005467">
    <property type="entry name" value="His_kinase_dom"/>
</dbReference>
<dbReference type="InterPro" id="IPR036097">
    <property type="entry name" value="HisK_dim/P_sf"/>
</dbReference>
<dbReference type="InterPro" id="IPR004358">
    <property type="entry name" value="Sig_transdc_His_kin-like_C"/>
</dbReference>
<dbReference type="PANTHER" id="PTHR45453:SF2">
    <property type="entry name" value="HISTIDINE KINASE"/>
    <property type="match status" value="1"/>
</dbReference>
<dbReference type="PANTHER" id="PTHR45453">
    <property type="entry name" value="PHOSPHATE REGULON SENSOR PROTEIN PHOR"/>
    <property type="match status" value="1"/>
</dbReference>
<dbReference type="Pfam" id="PF02518">
    <property type="entry name" value="HATPase_c"/>
    <property type="match status" value="1"/>
</dbReference>
<dbReference type="PRINTS" id="PR00344">
    <property type="entry name" value="BCTRLSENSOR"/>
</dbReference>
<dbReference type="SMART" id="SM00387">
    <property type="entry name" value="HATPase_c"/>
    <property type="match status" value="1"/>
</dbReference>
<dbReference type="SUPFAM" id="SSF55874">
    <property type="entry name" value="ATPase domain of HSP90 chaperone/DNA topoisomerase II/histidine kinase"/>
    <property type="match status" value="1"/>
</dbReference>
<dbReference type="SUPFAM" id="SSF47384">
    <property type="entry name" value="Homodimeric domain of signal transducing histidine kinase"/>
    <property type="match status" value="1"/>
</dbReference>
<dbReference type="PROSITE" id="PS50109">
    <property type="entry name" value="HIS_KIN"/>
    <property type="match status" value="1"/>
</dbReference>
<reference key="1">
    <citation type="journal article" date="2005" name="J. Bacteriol.">
        <title>Whole-genome sequencing of Staphylococcus haemolyticus uncovers the extreme plasticity of its genome and the evolution of human-colonizing staphylococcal species.</title>
        <authorList>
            <person name="Takeuchi F."/>
            <person name="Watanabe S."/>
            <person name="Baba T."/>
            <person name="Yuzawa H."/>
            <person name="Ito T."/>
            <person name="Morimoto Y."/>
            <person name="Kuroda M."/>
            <person name="Cui L."/>
            <person name="Takahashi M."/>
            <person name="Ankai A."/>
            <person name="Baba S."/>
            <person name="Fukui S."/>
            <person name="Lee J.C."/>
            <person name="Hiramatsu K."/>
        </authorList>
    </citation>
    <scope>NUCLEOTIDE SEQUENCE [LARGE SCALE GENOMIC DNA]</scope>
    <source>
        <strain>JCSC1435</strain>
    </source>
</reference>
<organism>
    <name type="scientific">Staphylococcus haemolyticus (strain JCSC1435)</name>
    <dbReference type="NCBI Taxonomy" id="279808"/>
    <lineage>
        <taxon>Bacteria</taxon>
        <taxon>Bacillati</taxon>
        <taxon>Bacillota</taxon>
        <taxon>Bacilli</taxon>
        <taxon>Bacillales</taxon>
        <taxon>Staphylococcaceae</taxon>
        <taxon>Staphylococcus</taxon>
    </lineage>
</organism>
<keyword id="KW-0046">Antibiotic resistance</keyword>
<keyword id="KW-0067">ATP-binding</keyword>
<keyword id="KW-1003">Cell membrane</keyword>
<keyword id="KW-0418">Kinase</keyword>
<keyword id="KW-0472">Membrane</keyword>
<keyword id="KW-0547">Nucleotide-binding</keyword>
<keyword id="KW-0597">Phosphoprotein</keyword>
<keyword id="KW-0808">Transferase</keyword>
<keyword id="KW-0812">Transmembrane</keyword>
<keyword id="KW-1133">Transmembrane helix</keyword>
<keyword id="KW-0902">Two-component regulatory system</keyword>
<keyword id="KW-0843">Virulence</keyword>
<sequence>MSNLKWFWLFLKTRSNWIFWIVFLHLILLGMAYIDYDISIESIGFIVTLNLGLTAMFLIFTFLKEVKLYQHLYNNKEIEEIKHKDLAEDPFQKEVVNYLYRKLTSQKERVVEQQLHIQSTEQSLTEFVHDIKTPVTAMKLLIDQEEEGKRKKSLLYEWARINELLDKQLYLTRLESKNRDMYFEETSLKRLVIDEVQLTRHISQAKGIGYDLDLETNLDVYTDVKWCRMMIRQILSNSLKYSQGQDIIIRSYTNDGHVTLEIKDFGRGISHKDLPRIFERGFTSTVNRNETTSSGIGLYLVNSVKDQLGINVRVESTVGQGTTFVLTFPKQNELMARMTQVTTM</sequence>
<name>GRAS_STAHJ</name>
<feature type="chain" id="PRO_0000347929" description="Sensor histidine kinase GraS">
    <location>
        <begin position="1"/>
        <end position="344"/>
    </location>
</feature>
<feature type="transmembrane region" description="Helical" evidence="2">
    <location>
        <begin position="18"/>
        <end position="38"/>
    </location>
</feature>
<feature type="transmembrane region" description="Helical" evidence="2">
    <location>
        <begin position="43"/>
        <end position="63"/>
    </location>
</feature>
<feature type="domain" description="Histidine kinase" evidence="3">
    <location>
        <begin position="126"/>
        <end position="332"/>
    </location>
</feature>
<feature type="modified residue" description="Phosphohistidine; by autocatalysis" evidence="3">
    <location>
        <position position="129"/>
    </location>
</feature>
<accession>Q4L482</accession>
<comment type="function">
    <text evidence="1">Member of the two-component regulatory system GraR/GraS involved in resistance against cationic antimicrobial peptides (CAMPs). GraS probably functions as a sensor protein kinase which is autophosphorylated at a histidine residue and transfers its phosphate group to GraR (By similarity).</text>
</comment>
<comment type="catalytic activity">
    <reaction>
        <text>ATP + protein L-histidine = ADP + protein N-phospho-L-histidine.</text>
        <dbReference type="EC" id="2.7.13.3"/>
    </reaction>
</comment>
<comment type="subcellular location">
    <subcellularLocation>
        <location evidence="4">Cell membrane</location>
        <topology evidence="4">Multi-pass membrane protein</topology>
    </subcellularLocation>
</comment>
<comment type="PTM">
    <text evidence="1">Autophosphorylated.</text>
</comment>
<evidence type="ECO:0000250" key="1"/>
<evidence type="ECO:0000255" key="2"/>
<evidence type="ECO:0000255" key="3">
    <source>
        <dbReference type="PROSITE-ProRule" id="PRU00107"/>
    </source>
</evidence>
<evidence type="ECO:0000305" key="4"/>
<gene>
    <name type="primary">graS</name>
    <name type="ordered locus">SH2234</name>
</gene>
<protein>
    <recommendedName>
        <fullName>Sensor histidine kinase GraS</fullName>
        <ecNumber>2.7.13.3</ecNumber>
    </recommendedName>
    <alternativeName>
        <fullName>Glycopeptide resistance-associated protein S</fullName>
    </alternativeName>
</protein>